<proteinExistence type="evidence at protein level"/>
<organism>
    <name type="scientific">Metapseudomonas resinovorans</name>
    <name type="common">Pseudomonas resinovorans</name>
    <dbReference type="NCBI Taxonomy" id="53412"/>
    <lineage>
        <taxon>Bacteria</taxon>
        <taxon>Pseudomonadati</taxon>
        <taxon>Pseudomonadota</taxon>
        <taxon>Gammaproteobacteria</taxon>
        <taxon>Pseudomonadales</taxon>
        <taxon>Pseudomonadaceae</taxon>
        <taxon>Metapseudomonas</taxon>
    </lineage>
</organism>
<evidence type="ECO:0000255" key="1">
    <source>
        <dbReference type="PROSITE-ProRule" id="PRU00628"/>
    </source>
</evidence>
<evidence type="ECO:0000269" key="2">
    <source>
    </source>
</evidence>
<evidence type="ECO:0000269" key="3">
    <source>
    </source>
</evidence>
<evidence type="ECO:0000269" key="4">
    <source>
    </source>
</evidence>
<evidence type="ECO:0000269" key="5">
    <source>
    </source>
</evidence>
<evidence type="ECO:0007829" key="6">
    <source>
        <dbReference type="PDB" id="7BUH"/>
    </source>
</evidence>
<feature type="chain" id="PRO_0000419028" description="Ferredoxin CarAc">
    <location>
        <begin position="1"/>
        <end position="107"/>
    </location>
</feature>
<feature type="domain" description="Rieske" evidence="1">
    <location>
        <begin position="6"/>
        <end position="102"/>
    </location>
</feature>
<feature type="binding site" evidence="1 3 4">
    <location>
        <position position="46"/>
    </location>
    <ligand>
        <name>[2Fe-2S] cluster</name>
        <dbReference type="ChEBI" id="CHEBI:190135"/>
    </ligand>
</feature>
<feature type="binding site" evidence="1 3 4">
    <location>
        <position position="48"/>
    </location>
    <ligand>
        <name>[2Fe-2S] cluster</name>
        <dbReference type="ChEBI" id="CHEBI:190135"/>
    </ligand>
</feature>
<feature type="binding site" evidence="1 3 4">
    <location>
        <position position="65"/>
    </location>
    <ligand>
        <name>[2Fe-2S] cluster</name>
        <dbReference type="ChEBI" id="CHEBI:190135"/>
    </ligand>
</feature>
<feature type="binding site" evidence="1 3 4">
    <location>
        <position position="68"/>
    </location>
    <ligand>
        <name>[2Fe-2S] cluster</name>
        <dbReference type="ChEBI" id="CHEBI:190135"/>
    </ligand>
</feature>
<feature type="strand" evidence="6">
    <location>
        <begin position="5"/>
        <end position="10"/>
    </location>
</feature>
<feature type="helix" evidence="6">
    <location>
        <begin position="11"/>
        <end position="13"/>
    </location>
</feature>
<feature type="strand" evidence="6">
    <location>
        <begin position="19"/>
        <end position="24"/>
    </location>
</feature>
<feature type="strand" evidence="6">
    <location>
        <begin position="27"/>
        <end position="35"/>
    </location>
</feature>
<feature type="strand" evidence="6">
    <location>
        <begin position="38"/>
        <end position="45"/>
    </location>
</feature>
<feature type="turn" evidence="6">
    <location>
        <begin position="47"/>
        <end position="49"/>
    </location>
</feature>
<feature type="helix" evidence="6">
    <location>
        <begin position="53"/>
        <end position="55"/>
    </location>
</feature>
<feature type="strand" evidence="6">
    <location>
        <begin position="56"/>
        <end position="59"/>
    </location>
</feature>
<feature type="strand" evidence="6">
    <location>
        <begin position="62"/>
        <end position="64"/>
    </location>
</feature>
<feature type="turn" evidence="6">
    <location>
        <begin position="66"/>
        <end position="68"/>
    </location>
</feature>
<feature type="strand" evidence="6">
    <location>
        <begin position="71"/>
        <end position="73"/>
    </location>
</feature>
<feature type="turn" evidence="6">
    <location>
        <begin position="74"/>
        <end position="76"/>
    </location>
</feature>
<feature type="strand" evidence="6">
    <location>
        <begin position="79"/>
        <end position="81"/>
    </location>
</feature>
<feature type="strand" evidence="6">
    <location>
        <begin position="93"/>
        <end position="96"/>
    </location>
</feature>
<feature type="strand" evidence="6">
    <location>
        <begin position="99"/>
        <end position="103"/>
    </location>
</feature>
<gene>
    <name type="primary">carAc</name>
</gene>
<reference key="1">
    <citation type="journal article" date="1997" name="J. Bacteriol.">
        <title>Cloning of genes involved in carbazole degradation of Pseudomonas sp. strain CA10: nucleotide sequences of genes and characterization of meta-cleavage enzymes and hydrolase.</title>
        <authorList>
            <person name="Sato S.I."/>
            <person name="Ouchiyama N."/>
            <person name="Kimura T."/>
            <person name="Nojiri H."/>
            <person name="Yamane H."/>
            <person name="Omori T."/>
        </authorList>
    </citation>
    <scope>NUCLEOTIDE SEQUENCE [GENOMIC DNA]</scope>
    <scope>NOMENCLATURE</scope>
    <source>
        <strain>CA10</strain>
    </source>
</reference>
<reference key="2">
    <citation type="journal article" date="1997" name="J. Bacteriol.">
        <title>Identification and characterization of genes encoding carbazole 1,9a-dioxygenase in Pseudomonas sp. strain CA10.</title>
        <authorList>
            <person name="Sato S.I."/>
            <person name="Nam J.W."/>
            <person name="Kasuga K."/>
            <person name="Nojiri H."/>
            <person name="Yamane H."/>
            <person name="Omori T."/>
        </authorList>
    </citation>
    <scope>NUCLEOTIDE SEQUENCE [GENOMIC DNA]</scope>
    <scope>FUNCTION IN THE CARBAZOLE DEGRADATION</scope>
    <source>
        <strain>CA10</strain>
    </source>
</reference>
<reference key="3">
    <citation type="journal article" date="2001" name="J. Bacteriol.">
        <title>Genetic characterization and evolutionary implications of a car gene cluster in the carbazole degrader Pseudomonas sp. strain CA10.</title>
        <authorList>
            <person name="Nojiri H."/>
            <person name="Sekiguchi H."/>
            <person name="Maeda K."/>
            <person name="Urata M."/>
            <person name="Nakai S."/>
            <person name="Yoshida T."/>
            <person name="Habe H."/>
            <person name="Omori T."/>
        </authorList>
    </citation>
    <scope>NUCLEOTIDE SEQUENCE [GENOMIC DNA]</scope>
    <source>
        <strain>CA10</strain>
    </source>
</reference>
<reference key="4">
    <citation type="journal article" date="2003" name="J. Mol. Biol.">
        <title>Complete nucleotide sequence of carbazole/dioxin-degrading plasmid pCAR1 in Pseudomonas resinovorans strain CA10 indicates its mosaicity and the presence of large catabolic transposon Tn4676.</title>
        <authorList>
            <person name="Maeda K."/>
            <person name="Nojiri H."/>
            <person name="Shintani M."/>
            <person name="Yoshida T."/>
            <person name="Habe H."/>
            <person name="Omori T."/>
        </authorList>
    </citation>
    <scope>NUCLEOTIDE SEQUENCE [GENOMIC DNA]</scope>
    <source>
        <plasmid>pCAR1</plasmid>
    </source>
</reference>
<reference key="5">
    <citation type="journal article" date="2004" name="J. Bacteriol.">
        <title>Transcriptional regulation of the ant operon, encoding two-component anthranilate 1,2-dioxygenase, on the carbazole-degradative plasmid pCAR1 of Pseudomonas resinovorans strain CA10.</title>
        <authorList>
            <person name="Urata M."/>
            <person name="Miyakoshi M."/>
            <person name="Kai S."/>
            <person name="Maeda K."/>
            <person name="Habe H."/>
            <person name="Omori T."/>
            <person name="Yamane H."/>
            <person name="Nojiri H."/>
        </authorList>
    </citation>
    <scope>NUCLEOTIDE SEQUENCE [GENOMIC DNA]</scope>
    <source>
        <strain>CA10</strain>
        <plasmid>pCAR1</plasmid>
    </source>
</reference>
<reference key="6">
    <citation type="journal article" date="2006" name="Appl. Environ. Microbiol.">
        <title>Characterization of the replication, maintenance, and transfer features of the IncP-7 plasmid pCAR1, which carries genes involved in carbazole and dioxin degradation.</title>
        <authorList>
            <person name="Shintani M."/>
            <person name="Yano H."/>
            <person name="Habe H."/>
            <person name="Omori T."/>
            <person name="Yamane H."/>
            <person name="Tsuda M."/>
            <person name="Nojiri H."/>
        </authorList>
    </citation>
    <scope>NUCLEOTIDE SEQUENCE [GENOMIC DNA]</scope>
    <source>
        <plasmid>pCAR1</plasmid>
    </source>
</reference>
<reference key="7">
    <citation type="journal article" date="2007" name="J. Bacteriol.">
        <title>Transcriptome analysis of Pseudomonas putida KT2440 harboring the completely sequenced IncP-7 plasmid pCAR1.</title>
        <authorList>
            <person name="Miyakoshi M."/>
            <person name="Shintani M."/>
            <person name="Terabayashi T."/>
            <person name="Kai S."/>
            <person name="Yamane H."/>
            <person name="Nojiri H."/>
        </authorList>
    </citation>
    <scope>NUCLEOTIDE SEQUENCE [GENOMIC DNA]</scope>
    <source>
        <plasmid>pCAR1</plasmid>
    </source>
</reference>
<reference key="8">
    <citation type="journal article" date="2009" name="Appl. Environ. Microbiol.">
        <title>Carbazole-degradative IncP-7 plasmid pCAR1.2 is structurally unstable in Pseudomonas fluorescens Pf0-1, which accumulates catechol, the intermediate of the carbazole degradation pathway.</title>
        <authorList>
            <person name="Takahashi Y."/>
            <person name="Shintani M."/>
            <person name="Li L."/>
            <person name="Yamane H."/>
            <person name="Nojiri H."/>
        </authorList>
    </citation>
    <scope>NUCLEOTIDE SEQUENCE [GENOMIC DNA]</scope>
    <source>
        <plasmid>pCAR1</plasmid>
    </source>
</reference>
<reference key="9">
    <citation type="journal article" date="2009" name="Biosci. Biotechnol. Biochem.">
        <title>The complete nucleotide sequence of pCAR2: pCAR2 and pCAR1 were structurally identical IncP-7 carbazole degradative plasmids.</title>
        <authorList>
            <person name="Takahashi Y."/>
            <person name="Shintani M."/>
            <person name="Yamane H."/>
            <person name="Nojiri H."/>
        </authorList>
    </citation>
    <scope>NUCLEOTIDE SEQUENCE [GENOMIC DNA]</scope>
    <source>
        <plasmid>pCAR1</plasmid>
    </source>
</reference>
<reference key="10">
    <citation type="journal article" date="2009" name="BMC Genomics">
        <title>High-resolution mapping of plasmid transcriptomes in different host bacteria.</title>
        <authorList>
            <person name="Miyakoshi M."/>
            <person name="Nishida H."/>
            <person name="Shintani M."/>
            <person name="Yamane H."/>
            <person name="Nojiri H."/>
        </authorList>
    </citation>
    <scope>NUCLEOTIDE SEQUENCE [GENOMIC DNA]</scope>
    <source>
        <plasmid>pCAR1</plasmid>
    </source>
</reference>
<reference key="11">
    <citation type="journal article" date="2010" name="Environ. Microbiol.">
        <title>Response of the Pseudomonas host chromosomal transcriptome to carriage of the IncP-7 plasmid pCAR1.</title>
        <authorList>
            <person name="Shintani M."/>
            <person name="Takahashi Y."/>
            <person name="Tokumaru H."/>
            <person name="Kadota K."/>
            <person name="Hara H."/>
            <person name="Miyakoshi M."/>
            <person name="Naito K."/>
            <person name="Yamane H."/>
            <person name="Nishida H."/>
            <person name="Nojiri H."/>
        </authorList>
    </citation>
    <scope>NUCLEOTIDE SEQUENCE [GENOMIC DNA]</scope>
    <source>
        <plasmid>pCAR1</plasmid>
    </source>
</reference>
<reference key="12">
    <citation type="journal article" date="2010" name="J. Bacteriol.">
        <title>Pmr, a histone-like protein H1 (H-NS) family protein encoded by the IncP-7 plasmid pCAR1, is a key global regulator that alters host function.</title>
        <authorList>
            <person name="Yun C.S."/>
            <person name="Suzuki C."/>
            <person name="Naito K."/>
            <person name="Takeda T."/>
            <person name="Takahashi Y."/>
            <person name="Sai F."/>
            <person name="Terabayashi T."/>
            <person name="Miyakoshi M."/>
            <person name="Shintani M."/>
            <person name="Nishida H."/>
            <person name="Yamane H."/>
            <person name="Nojiri H."/>
        </authorList>
    </citation>
    <scope>NUCLEOTIDE SEQUENCE [GENOMIC DNA]</scope>
    <source>
        <plasmid>pCAR1</plasmid>
    </source>
</reference>
<reference key="13">
    <citation type="journal article" date="2002" name="Appl. Environ. Microbiol.">
        <title>Purification and characterization of carbazole 1,9a-dioxygenase, a three-component dioxygenase system of Pseudomonas resinovorans strain CA10.</title>
        <authorList>
            <person name="Nam J.W."/>
            <person name="Nojiri H."/>
            <person name="Noguchi H."/>
            <person name="Uchimura H."/>
            <person name="Yoshida T."/>
            <person name="Habe H."/>
            <person name="Yamane H."/>
            <person name="Omori T."/>
        </authorList>
    </citation>
    <scope>PROTEIN SEQUENCE OF 1-15</scope>
    <scope>FUNCTION AS A FERREDOXIN</scope>
    <scope>BIOPHYSICOCHEMICAL PROPERTIES</scope>
    <scope>COFACTOR</scope>
    <scope>SUBUNIT</scope>
    <source>
        <strain>CA10</strain>
    </source>
</reference>
<reference key="14">
    <citation type="journal article" date="2005" name="Proteins">
        <title>Crystal structure of the ferredoxin component of carbazole 1,9a-dioxygenase of Pseudomonas resinovorans strain CA10, a novel Rieske non-heme iron oxygenase system.</title>
        <authorList>
            <person name="Nam J.W."/>
            <person name="Noguchi H."/>
            <person name="Fujimoto Z."/>
            <person name="Mizuno H."/>
            <person name="Ashikawa Y."/>
            <person name="Abo M."/>
            <person name="Fushinobu S."/>
            <person name="Kobashi N."/>
            <person name="Wakagi T."/>
            <person name="Iwata K."/>
            <person name="Yoshida T."/>
            <person name="Habe H."/>
            <person name="Yamane H."/>
            <person name="Omori T."/>
            <person name="Nojiri H."/>
        </authorList>
    </citation>
    <scope>X-RAY CRYSTALLOGRAPHY (1.90 ANGSTROMS) IN COMPLEX WITH IRON-SULFUR (2FE-2S)</scope>
    <source>
        <strain>CA10</strain>
    </source>
</reference>
<reference key="15">
    <citation type="journal article" date="2006" name="Structure">
        <title>Electron transfer complex formation between oxygenase and ferredoxin components in Rieske nonheme iron oxygenase system.</title>
        <authorList>
            <person name="Ashikawa Y."/>
            <person name="Fujimoto Z."/>
            <person name="Noguchi H."/>
            <person name="Habe H."/>
            <person name="Omori T."/>
            <person name="Yamane H."/>
            <person name="Nojiri H."/>
        </authorList>
    </citation>
    <scope>X-RAY CRYSTALLOGRAPHY (1.80 ANGSTROMS) IN COMPLEX WITH IRON-SULFUR (2FE-2S)</scope>
    <scope>COFACTOR</scope>
</reference>
<protein>
    <recommendedName>
        <fullName>Ferredoxin CarAc</fullName>
    </recommendedName>
    <alternativeName>
        <fullName>Carbazole 1,9a-dioxygenase, ferredoxin component</fullName>
        <shortName>CARDO</shortName>
    </alternativeName>
</protein>
<dbReference type="EMBL" id="AB047548">
    <property type="protein sequence ID" value="BAB32770.1"/>
    <property type="molecule type" value="Genomic_DNA"/>
</dbReference>
<dbReference type="EMBL" id="AB088420">
    <property type="protein sequence ID" value="BAC41549.1"/>
    <property type="molecule type" value="Genomic_DNA"/>
</dbReference>
<dbReference type="RefSeq" id="NP_758571.1">
    <property type="nucleotide sequence ID" value="NC_004444.1"/>
</dbReference>
<dbReference type="RefSeq" id="WP_011077882.1">
    <property type="nucleotide sequence ID" value="NC_004444.1"/>
</dbReference>
<dbReference type="PDB" id="1VCK">
    <property type="method" value="X-ray"/>
    <property type="resolution" value="1.90 A"/>
    <property type="chains" value="A=1-107"/>
</dbReference>
<dbReference type="PDB" id="2DE5">
    <property type="method" value="X-ray"/>
    <property type="resolution" value="1.90 A"/>
    <property type="chains" value="D/E/F=1-107"/>
</dbReference>
<dbReference type="PDB" id="2DE6">
    <property type="method" value="X-ray"/>
    <property type="resolution" value="1.80 A"/>
    <property type="chains" value="D/E/F=1-107"/>
</dbReference>
<dbReference type="PDB" id="2DE7">
    <property type="method" value="X-ray"/>
    <property type="resolution" value="2.00 A"/>
    <property type="chains" value="D/E/F=1-107"/>
</dbReference>
<dbReference type="PDB" id="3VMG">
    <property type="method" value="X-ray"/>
    <property type="resolution" value="1.95 A"/>
    <property type="chains" value="D/E/F=1-107"/>
</dbReference>
<dbReference type="PDB" id="3VMH">
    <property type="method" value="X-ray"/>
    <property type="resolution" value="1.85 A"/>
    <property type="chains" value="D/E/F=1-107"/>
</dbReference>
<dbReference type="PDB" id="3VMI">
    <property type="method" value="X-ray"/>
    <property type="resolution" value="2.00 A"/>
    <property type="chains" value="D/E/F=1-107"/>
</dbReference>
<dbReference type="PDB" id="4NB8">
    <property type="method" value="X-ray"/>
    <property type="resolution" value="2.01 A"/>
    <property type="chains" value="D/E/F=1-107"/>
</dbReference>
<dbReference type="PDB" id="4NB9">
    <property type="method" value="X-ray"/>
    <property type="resolution" value="2.05 A"/>
    <property type="chains" value="D/E/F=1-107"/>
</dbReference>
<dbReference type="PDB" id="4NBA">
    <property type="method" value="X-ray"/>
    <property type="resolution" value="2.10 A"/>
    <property type="chains" value="D/E/F=1-107"/>
</dbReference>
<dbReference type="PDB" id="4NBB">
    <property type="method" value="X-ray"/>
    <property type="resolution" value="2.05 A"/>
    <property type="chains" value="D/E/F=1-107"/>
</dbReference>
<dbReference type="PDB" id="4NBC">
    <property type="method" value="X-ray"/>
    <property type="resolution" value="1.94 A"/>
    <property type="chains" value="D/E/F=1-107"/>
</dbReference>
<dbReference type="PDB" id="4NBD">
    <property type="method" value="X-ray"/>
    <property type="resolution" value="1.95 A"/>
    <property type="chains" value="D/E=1-107"/>
</dbReference>
<dbReference type="PDB" id="4NBE">
    <property type="method" value="X-ray"/>
    <property type="resolution" value="2.10 A"/>
    <property type="chains" value="D/E=1-107"/>
</dbReference>
<dbReference type="PDB" id="4NBF">
    <property type="method" value="X-ray"/>
    <property type="resolution" value="2.00 A"/>
    <property type="chains" value="D/E/F=1-107"/>
</dbReference>
<dbReference type="PDB" id="4NBG">
    <property type="method" value="X-ray"/>
    <property type="resolution" value="1.85 A"/>
    <property type="chains" value="D/E/F=1-107"/>
</dbReference>
<dbReference type="PDB" id="4NBH">
    <property type="method" value="X-ray"/>
    <property type="resolution" value="2.15 A"/>
    <property type="chains" value="D/E/F=1-107"/>
</dbReference>
<dbReference type="PDB" id="6LLF">
    <property type="method" value="X-ray"/>
    <property type="resolution" value="1.93 A"/>
    <property type="chains" value="D/E/F=1-107"/>
</dbReference>
<dbReference type="PDB" id="6LLH">
    <property type="method" value="X-ray"/>
    <property type="resolution" value="1.99 A"/>
    <property type="chains" value="D/E/F=1-107"/>
</dbReference>
<dbReference type="PDB" id="7BUH">
    <property type="method" value="X-ray"/>
    <property type="resolution" value="1.79 A"/>
    <property type="chains" value="A=1-107"/>
</dbReference>
<dbReference type="PDB" id="7BUI">
    <property type="method" value="X-ray"/>
    <property type="resolution" value="2.15 A"/>
    <property type="chains" value="D/E=1-107"/>
</dbReference>
<dbReference type="PDBsum" id="1VCK"/>
<dbReference type="PDBsum" id="2DE5"/>
<dbReference type="PDBsum" id="2DE6"/>
<dbReference type="PDBsum" id="2DE7"/>
<dbReference type="PDBsum" id="3VMG"/>
<dbReference type="PDBsum" id="3VMH"/>
<dbReference type="PDBsum" id="3VMI"/>
<dbReference type="PDBsum" id="4NB8"/>
<dbReference type="PDBsum" id="4NB9"/>
<dbReference type="PDBsum" id="4NBA"/>
<dbReference type="PDBsum" id="4NBB"/>
<dbReference type="PDBsum" id="4NBC"/>
<dbReference type="PDBsum" id="4NBD"/>
<dbReference type="PDBsum" id="4NBE"/>
<dbReference type="PDBsum" id="4NBF"/>
<dbReference type="PDBsum" id="4NBG"/>
<dbReference type="PDBsum" id="4NBH"/>
<dbReference type="PDBsum" id="6LLF"/>
<dbReference type="PDBsum" id="6LLH"/>
<dbReference type="PDBsum" id="7BUH"/>
<dbReference type="PDBsum" id="7BUI"/>
<dbReference type="SMR" id="Q8GI16"/>
<dbReference type="DIP" id="DIP-29166N"/>
<dbReference type="IntAct" id="Q8GI16">
    <property type="interactions" value="1"/>
</dbReference>
<dbReference type="DrugBank" id="DB07301">
    <property type="generic name" value="Carbazole"/>
</dbReference>
<dbReference type="BRENDA" id="1.14.12.22">
    <property type="organism ID" value="7692"/>
</dbReference>
<dbReference type="EvolutionaryTrace" id="Q8GI16"/>
<dbReference type="GO" id="GO:0051537">
    <property type="term" value="F:2 iron, 2 sulfur cluster binding"/>
    <property type="evidence" value="ECO:0000314"/>
    <property type="project" value="UniProtKB"/>
</dbReference>
<dbReference type="GO" id="GO:0051213">
    <property type="term" value="F:dioxygenase activity"/>
    <property type="evidence" value="ECO:0007669"/>
    <property type="project" value="UniProtKB-KW"/>
</dbReference>
<dbReference type="GO" id="GO:0008901">
    <property type="term" value="F:ferredoxin hydrogenase activity"/>
    <property type="evidence" value="ECO:0000314"/>
    <property type="project" value="UniProtKB"/>
</dbReference>
<dbReference type="GO" id="GO:0046872">
    <property type="term" value="F:metal ion binding"/>
    <property type="evidence" value="ECO:0007669"/>
    <property type="project" value="UniProtKB-KW"/>
</dbReference>
<dbReference type="GO" id="GO:0046232">
    <property type="term" value="P:carbazole catabolic process"/>
    <property type="evidence" value="ECO:0000314"/>
    <property type="project" value="UniProtKB"/>
</dbReference>
<dbReference type="CDD" id="cd03528">
    <property type="entry name" value="Rieske_RO_ferredoxin"/>
    <property type="match status" value="1"/>
</dbReference>
<dbReference type="Gene3D" id="2.102.10.10">
    <property type="entry name" value="Rieske [2Fe-2S] iron-sulphur domain"/>
    <property type="match status" value="1"/>
</dbReference>
<dbReference type="InterPro" id="IPR017941">
    <property type="entry name" value="Rieske_2Fe-2S"/>
</dbReference>
<dbReference type="InterPro" id="IPR036922">
    <property type="entry name" value="Rieske_2Fe-2S_sf"/>
</dbReference>
<dbReference type="PANTHER" id="PTHR21496:SF23">
    <property type="entry name" value="3-PHENYLPROPIONATE_CINNAMIC ACID DIOXYGENASE FERREDOXIN SUBUNIT"/>
    <property type="match status" value="1"/>
</dbReference>
<dbReference type="PANTHER" id="PTHR21496">
    <property type="entry name" value="FERREDOXIN-RELATED"/>
    <property type="match status" value="1"/>
</dbReference>
<dbReference type="Pfam" id="PF00355">
    <property type="entry name" value="Rieske"/>
    <property type="match status" value="1"/>
</dbReference>
<dbReference type="SUPFAM" id="SSF50022">
    <property type="entry name" value="ISP domain"/>
    <property type="match status" value="1"/>
</dbReference>
<dbReference type="PROSITE" id="PS51296">
    <property type="entry name" value="RIESKE"/>
    <property type="match status" value="1"/>
</dbReference>
<comment type="function">
    <text evidence="2 5">Part of the multicomponent carbazole 1,9a-dioxygenase (CARDO), that converts carbazole (CAR) into 2-aminobiphenyl-2,3-diol. Acts as a mediator in the electron transfer from CarAd to CarAa.</text>
</comment>
<comment type="cofactor">
    <cofactor evidence="1 2 4">
        <name>[2Fe-2S] cluster</name>
        <dbReference type="ChEBI" id="CHEBI:190135"/>
    </cofactor>
    <text evidence="1 2 4">Binds 1 [2Fe-2S] cluster per subunit.</text>
</comment>
<comment type="biophysicochemical properties">
    <phDependence>
        <text evidence="2">Optimum pH is between 7 and 7.5.</text>
    </phDependence>
    <temperatureDependence>
        <text evidence="2">Optimum temperature is 30 degrees Celsius.</text>
    </temperatureDependence>
</comment>
<comment type="subunit">
    <text evidence="2 3 4">Monomer. Carbazole 1,9a-dioxygenase complex consists of a terminal oxygenase component CarAa, a ferredoxin reductase component CarAd and a ferredoxin component CarAc.</text>
</comment>
<accession>Q8GI16</accession>
<sequence>MNQIWLKVCAASDMQPGTIRRVNRVGAAPLAVYRVGDQFYATEDTCTHGIASLSEGTLDGDVIECPFHGGAFNVCTGMPASSPCTVPLGVFEVEVKEGEVYVAGEKK</sequence>
<name>CARAC_METRE</name>
<keyword id="KW-0001">2Fe-2S</keyword>
<keyword id="KW-0002">3D-structure</keyword>
<keyword id="KW-0223">Dioxygenase</keyword>
<keyword id="KW-0903">Direct protein sequencing</keyword>
<keyword id="KW-0408">Iron</keyword>
<keyword id="KW-0411">Iron-sulfur</keyword>
<keyword id="KW-0479">Metal-binding</keyword>
<keyword id="KW-0520">NAD</keyword>
<keyword id="KW-0560">Oxidoreductase</keyword>
<keyword id="KW-0614">Plasmid</keyword>
<geneLocation type="plasmid">
    <name>pCAR1</name>
</geneLocation>